<feature type="chain" id="PRO_0000119123" description="Kelch-like protein 20">
    <location>
        <begin position="1"/>
        <end position="609"/>
    </location>
</feature>
<feature type="domain" description="BTB" evidence="2">
    <location>
        <begin position="68"/>
        <end position="135"/>
    </location>
</feature>
<feature type="domain" description="BACK">
    <location>
        <begin position="170"/>
        <end position="272"/>
    </location>
</feature>
<feature type="repeat" description="Kelch 1">
    <location>
        <begin position="319"/>
        <end position="365"/>
    </location>
</feature>
<feature type="repeat" description="Kelch 2">
    <location>
        <begin position="367"/>
        <end position="413"/>
    </location>
</feature>
<feature type="repeat" description="Kelch 3">
    <location>
        <begin position="414"/>
        <end position="460"/>
    </location>
</feature>
<feature type="repeat" description="Kelch 4">
    <location>
        <begin position="462"/>
        <end position="507"/>
    </location>
</feature>
<feature type="repeat" description="Kelch 5">
    <location>
        <begin position="509"/>
        <end position="554"/>
    </location>
</feature>
<feature type="repeat" description="Kelch 6">
    <location>
        <begin position="556"/>
        <end position="601"/>
    </location>
</feature>
<feature type="splice variant" id="VSP_057026" description="In isoform 2." evidence="11">
    <original>MEGKPMRRCT</original>
    <variation>MVHGRKANAQ</variation>
    <location>
        <begin position="1"/>
        <end position="10"/>
    </location>
</feature>
<feature type="splice variant" id="VSP_057027" description="In isoform 2." evidence="11">
    <location>
        <begin position="11"/>
        <end position="199"/>
    </location>
</feature>
<feature type="mutagenesis site" description="In KLHL20m6; abolishes interaction with CUL3; when associated with A-111; A-113; A-146; A-148 and A-150." evidence="6 7 8 9">
    <original>V</original>
    <variation>A</variation>
    <location>
        <position position="109"/>
    </location>
</feature>
<feature type="mutagenesis site" description="In KLHL20m6; abolishes interaction with CUL3; when associated with A-109; A-113; A-146; A-148 and A-150." evidence="6 7 8 9">
    <original>I</original>
    <variation>A</variation>
    <location>
        <position position="111"/>
    </location>
</feature>
<feature type="mutagenesis site" description="In KLHL20m6; abolishes interaction with CUL3; when associated with A-109; A-111; A-146; A-148 and A-150." evidence="6 7 8 9">
    <original>D</original>
    <variation>A</variation>
    <location>
        <position position="113"/>
    </location>
</feature>
<feature type="mutagenesis site" description="In KLHL20m6; abolishes interaction with CUL3; when associated with A-109; A-111; A-113; A-148 and A-150." evidence="6 7 8 9">
    <original>C</original>
    <variation>A</variation>
    <location>
        <position position="146"/>
    </location>
</feature>
<feature type="mutagenesis site" description="In KLHL20m6; abolishes interaction with CUL3; when associated with A-109; A-111; A-113; A-146 and A-150." evidence="6 7 8 9">
    <original>L</original>
    <variation>A</variation>
    <location>
        <position position="148"/>
    </location>
</feature>
<feature type="mutagenesis site" description="In KLHL20m6; abolishes interaction with CUL3; when associated with A-109; A-111; A-113; A-146 and A-148." evidence="6 7 8 9">
    <original>L</original>
    <variation>A</variation>
    <location>
        <position position="150"/>
    </location>
</feature>
<feature type="sequence conflict" description="In Ref. 3; BAG50912." evidence="12" ref="3">
    <original>L</original>
    <variation>Q</variation>
    <location>
        <position position="171"/>
    </location>
</feature>
<feature type="sequence conflict" description="In Ref. 3; BAG50912." evidence="12" ref="3">
    <original>F</original>
    <variation>S</variation>
    <location>
        <position position="321"/>
    </location>
</feature>
<feature type="sequence conflict" description="In Ref. 3; BAG50912." evidence="12" ref="3">
    <original>S</original>
    <variation>N</variation>
    <location>
        <position position="334"/>
    </location>
</feature>
<feature type="sequence conflict" description="In Ref. 3; BAG50912." evidence="12" ref="3">
    <original>V</original>
    <variation>M</variation>
    <location>
        <position position="396"/>
    </location>
</feature>
<feature type="sequence conflict" description="In Ref. 2; BAA77027." evidence="12" ref="2">
    <original>G</original>
    <variation>W</variation>
    <location>
        <position position="593"/>
    </location>
</feature>
<feature type="strand" evidence="13">
    <location>
        <begin position="318"/>
        <end position="323"/>
    </location>
</feature>
<feature type="strand" evidence="13">
    <location>
        <begin position="335"/>
        <end position="339"/>
    </location>
</feature>
<feature type="turn" evidence="13">
    <location>
        <begin position="340"/>
        <end position="343"/>
    </location>
</feature>
<feature type="strand" evidence="13">
    <location>
        <begin position="344"/>
        <end position="348"/>
    </location>
</feature>
<feature type="strand" evidence="13">
    <location>
        <begin position="359"/>
        <end position="363"/>
    </location>
</feature>
<feature type="strand" evidence="13">
    <location>
        <begin position="366"/>
        <end position="370"/>
    </location>
</feature>
<feature type="strand" evidence="13">
    <location>
        <begin position="382"/>
        <end position="386"/>
    </location>
</feature>
<feature type="turn" evidence="13">
    <location>
        <begin position="387"/>
        <end position="390"/>
    </location>
</feature>
<feature type="strand" evidence="13">
    <location>
        <begin position="391"/>
        <end position="393"/>
    </location>
</feature>
<feature type="strand" evidence="13">
    <location>
        <begin position="407"/>
        <end position="411"/>
    </location>
</feature>
<feature type="strand" evidence="13">
    <location>
        <begin position="414"/>
        <end position="418"/>
    </location>
</feature>
<feature type="strand" evidence="13">
    <location>
        <begin position="423"/>
        <end position="426"/>
    </location>
</feature>
<feature type="strand" evidence="13">
    <location>
        <begin position="430"/>
        <end position="434"/>
    </location>
</feature>
<feature type="turn" evidence="13">
    <location>
        <begin position="435"/>
        <end position="438"/>
    </location>
</feature>
<feature type="strand" evidence="13">
    <location>
        <begin position="439"/>
        <end position="442"/>
    </location>
</feature>
<feature type="strand" evidence="13">
    <location>
        <begin position="454"/>
        <end position="458"/>
    </location>
</feature>
<feature type="strand" evidence="13">
    <location>
        <begin position="461"/>
        <end position="465"/>
    </location>
</feature>
<feature type="strand" evidence="13">
    <location>
        <begin position="470"/>
        <end position="473"/>
    </location>
</feature>
<feature type="strand" evidence="13">
    <location>
        <begin position="477"/>
        <end position="481"/>
    </location>
</feature>
<feature type="turn" evidence="13">
    <location>
        <begin position="482"/>
        <end position="485"/>
    </location>
</feature>
<feature type="strand" evidence="13">
    <location>
        <begin position="486"/>
        <end position="489"/>
    </location>
</feature>
<feature type="strand" evidence="13">
    <location>
        <begin position="501"/>
        <end position="505"/>
    </location>
</feature>
<feature type="strand" evidence="13">
    <location>
        <begin position="508"/>
        <end position="512"/>
    </location>
</feature>
<feature type="strand" evidence="13">
    <location>
        <begin position="517"/>
        <end position="520"/>
    </location>
</feature>
<feature type="strand" evidence="13">
    <location>
        <begin position="524"/>
        <end position="528"/>
    </location>
</feature>
<feature type="turn" evidence="13">
    <location>
        <begin position="529"/>
        <end position="532"/>
    </location>
</feature>
<feature type="strand" evidence="13">
    <location>
        <begin position="533"/>
        <end position="537"/>
    </location>
</feature>
<feature type="strand" evidence="13">
    <location>
        <begin position="548"/>
        <end position="552"/>
    </location>
</feature>
<feature type="strand" evidence="13">
    <location>
        <begin position="555"/>
        <end position="562"/>
    </location>
</feature>
<feature type="strand" evidence="13">
    <location>
        <begin position="567"/>
        <end position="575"/>
    </location>
</feature>
<feature type="turn" evidence="13">
    <location>
        <begin position="576"/>
        <end position="579"/>
    </location>
</feature>
<feature type="strand" evidence="13">
    <location>
        <begin position="580"/>
        <end position="584"/>
    </location>
</feature>
<feature type="strand" evidence="13">
    <location>
        <begin position="595"/>
        <end position="600"/>
    </location>
</feature>
<proteinExistence type="evidence at protein level"/>
<keyword id="KW-0002">3D-structure</keyword>
<keyword id="KW-0009">Actin-binding</keyword>
<keyword id="KW-0025">Alternative splicing</keyword>
<keyword id="KW-0966">Cell projection</keyword>
<keyword id="KW-0963">Cytoplasm</keyword>
<keyword id="KW-0333">Golgi apparatus</keyword>
<keyword id="KW-0880">Kelch repeat</keyword>
<keyword id="KW-0539">Nucleus</keyword>
<keyword id="KW-0653">Protein transport</keyword>
<keyword id="KW-1267">Proteomics identification</keyword>
<keyword id="KW-1185">Reference proteome</keyword>
<keyword id="KW-0677">Repeat</keyword>
<keyword id="KW-0813">Transport</keyword>
<keyword id="KW-0833">Ubl conjugation pathway</keyword>
<accession>Q9Y2M5</accession>
<accession>B3KMA0</accession>
<accession>B4DUR0</accession>
<accession>Q5TZF2</accession>
<accession>Q5ZF45</accession>
<accession>Q9H457</accession>
<evidence type="ECO:0000250" key="1"/>
<evidence type="ECO:0000255" key="2">
    <source>
        <dbReference type="PROSITE-ProRule" id="PRU00037"/>
    </source>
</evidence>
<evidence type="ECO:0000269" key="3">
    <source>
    </source>
</evidence>
<evidence type="ECO:0000269" key="4">
    <source>
    </source>
</evidence>
<evidence type="ECO:0000269" key="5">
    <source>
    </source>
</evidence>
<evidence type="ECO:0000269" key="6">
    <source>
    </source>
</evidence>
<evidence type="ECO:0000269" key="7">
    <source>
    </source>
</evidence>
<evidence type="ECO:0000269" key="8">
    <source>
    </source>
</evidence>
<evidence type="ECO:0000269" key="9">
    <source>
    </source>
</evidence>
<evidence type="ECO:0000269" key="10">
    <source>
    </source>
</evidence>
<evidence type="ECO:0000303" key="11">
    <source>
    </source>
</evidence>
<evidence type="ECO:0000305" key="12"/>
<evidence type="ECO:0007829" key="13">
    <source>
        <dbReference type="PDB" id="6GY5"/>
    </source>
</evidence>
<gene>
    <name type="primary">KLHL20</name>
    <name type="synonym">KLEIP</name>
    <name type="synonym">KLHLX</name>
</gene>
<comment type="function">
    <text evidence="3 5 6 7 8 9">Substrate-specific adapter of a BCR (BTB-CUL3-RBX1) E3 ubiquitin-protein ligase complex involved in interferon response and anterograde Golgi to endosome transport. The BCR(KLHL20) E3 ubiquitin ligase complex mediates the ubiquitination of DAPK1, leading to its degradation by the proteasome, thereby acting as a negative regulator of apoptosis (PubMed:20389280). The BCR(KLHL20) E3 ubiquitin ligase complex also specifically mediates 'Lys-33'-linked ubiquitination (PubMed:24768539). Involved in anterograde Golgi to endosome transport by mediating 'Lys-33'-linked ubiquitination of CORO7, promoting interaction between CORO7 and EPS15, thereby facilitating actin polymerization and post-Golgi trafficking (PubMed:24768539). Also acts as a regulator of endothelial migration during angiogenesis by controlling the activation of Rho GTPases. The BCR(KLHL20) E3 ubiquitin ligase complex acts as a regulator of neurite outgrowth by mediating ubiquitination and degradation of PDZ-RhoGEF/ARHGEF11 (PubMed:21670212). In case of tumor, the BCR(KLHL20) E3 ubiquitin ligase complex is involved in tumor hypoxia: following hypoxia, the BCR(KLHL20)complex mediates ubiquitination and degradation of PML, potentiating HIF-1 signaling and cancer progression (PubMed:21840486).</text>
</comment>
<comment type="pathway">
    <text>Protein modification; protein ubiquitination.</text>
</comment>
<comment type="subunit">
    <text evidence="3 4 6 7 8 9 10">Component of the BCR(KLHL20) E3 ubiquitin ligase complex, at least composed of CUL3, KLHL20 and RBX1. Interacts with PDZ-RhoGEF/ARHGEF11, DAPK1, PML and CORO7. Interacts with F-actin. Interacts with IFN-gamma (IFNG). Interacts (via kelch repeats) with IVNS1ABP (via kelch repeats); this interaction blocks the assembly of CUL3-KLHL20 complex (PubMed:25619834).</text>
</comment>
<comment type="interaction">
    <interactant intactId="EBI-714379">
        <id>Q9Y2M5</id>
    </interactant>
    <interactant intactId="EBI-11954292">
        <id>Q86V38</id>
        <label>ATN1</label>
    </interactant>
    <organismsDiffer>false</organismsDiffer>
    <experiments>3</experiments>
</comment>
<comment type="interaction">
    <interactant intactId="EBI-714379">
        <id>Q9Y2M5</id>
    </interactant>
    <interactant intactId="EBI-930964">
        <id>P54253</id>
        <label>ATXN1</label>
    </interactant>
    <organismsDiffer>false</organismsDiffer>
    <experiments>6</experiments>
</comment>
<comment type="interaction">
    <interactant intactId="EBI-714379">
        <id>Q9Y2M5</id>
    </interactant>
    <interactant intactId="EBI-946046">
        <id>P54252</id>
        <label>ATXN3</label>
    </interactant>
    <organismsDiffer>false</organismsDiffer>
    <experiments>3</experiments>
</comment>
<comment type="interaction">
    <interactant intactId="EBI-714379">
        <id>Q9Y2M5</id>
    </interactant>
    <interactant intactId="EBI-10988864">
        <id>P46379-2</id>
        <label>BAG6</label>
    </interactant>
    <organismsDiffer>false</organismsDiffer>
    <experiments>3</experiments>
</comment>
<comment type="interaction">
    <interactant intactId="EBI-714379">
        <id>Q9Y2M5</id>
    </interactant>
    <interactant intactId="EBI-6875961">
        <id>P02489</id>
        <label>CRYAA</label>
    </interactant>
    <organismsDiffer>false</organismsDiffer>
    <experiments>3</experiments>
</comment>
<comment type="interaction">
    <interactant intactId="EBI-714379">
        <id>Q9Y2M5</id>
    </interactant>
    <interactant intactId="EBI-456129">
        <id>Q13618</id>
        <label>CUL3</label>
    </interactant>
    <organismsDiffer>false</organismsDiffer>
    <experiments>13</experiments>
</comment>
<comment type="interaction">
    <interactant intactId="EBI-714379">
        <id>Q9Y2M5</id>
    </interactant>
    <interactant intactId="EBI-358616">
        <id>P53355</id>
        <label>DAPK1</label>
    </interactant>
    <organismsDiffer>false</organismsDiffer>
    <experiments>15</experiments>
</comment>
<comment type="interaction">
    <interactant intactId="EBI-714379">
        <id>Q9Y2M5</id>
    </interactant>
    <interactant intactId="EBI-8589586">
        <id>P09172</id>
        <label>DBH</label>
    </interactant>
    <organismsDiffer>false</organismsDiffer>
    <experiments>3</experiments>
</comment>
<comment type="interaction">
    <interactant intactId="EBI-714379">
        <id>Q9Y2M5</id>
    </interactant>
    <interactant intactId="EBI-25840379">
        <id>Q14203-5</id>
        <label>DCTN1</label>
    </interactant>
    <organismsDiffer>false</organismsDiffer>
    <experiments>3</experiments>
</comment>
<comment type="interaction">
    <interactant intactId="EBI-714379">
        <id>Q9Y2M5</id>
    </interactant>
    <interactant intactId="EBI-10976677">
        <id>G5E9A7</id>
        <label>DMWD</label>
    </interactant>
    <organismsDiffer>false</organismsDiffer>
    <experiments>3</experiments>
</comment>
<comment type="interaction">
    <interactant intactId="EBI-714379">
        <id>Q9Y2M5</id>
    </interactant>
    <interactant intactId="EBI-2565863">
        <id>P00488</id>
        <label>F13A1</label>
    </interactant>
    <organismsDiffer>false</organismsDiffer>
    <experiments>3</experiments>
</comment>
<comment type="interaction">
    <interactant intactId="EBI-714379">
        <id>Q9Y2M5</id>
    </interactant>
    <interactant intactId="EBI-348399">
        <id>P22607</id>
        <label>FGFR3</label>
    </interactant>
    <organismsDiffer>false</organismsDiffer>
    <experiments>3</experiments>
</comment>
<comment type="interaction">
    <interactant intactId="EBI-714379">
        <id>Q9Y2M5</id>
    </interactant>
    <interactant intactId="EBI-744302">
        <id>P14136</id>
        <label>GFAP</label>
    </interactant>
    <organismsDiffer>false</organismsDiffer>
    <experiments>3</experiments>
</comment>
<comment type="interaction">
    <interactant intactId="EBI-714379">
        <id>Q9Y2M5</id>
    </interactant>
    <interactant intactId="EBI-25913156">
        <id>O14908-2</id>
        <label>GIPC1</label>
    </interactant>
    <organismsDiffer>false</organismsDiffer>
    <experiments>3</experiments>
</comment>
<comment type="interaction">
    <interactant intactId="EBI-714379">
        <id>Q9Y2M5</id>
    </interactant>
    <interactant intactId="EBI-1955541">
        <id>Q53GS7</id>
        <label>GLE1</label>
    </interactant>
    <organismsDiffer>false</organismsDiffer>
    <experiments>3</experiments>
</comment>
<comment type="interaction">
    <interactant intactId="EBI-714379">
        <id>Q9Y2M5</id>
    </interactant>
    <interactant intactId="EBI-747754">
        <id>P28799</id>
        <label>GRN</label>
    </interactant>
    <organismsDiffer>false</organismsDiffer>
    <experiments>3</experiments>
</comment>
<comment type="interaction">
    <interactant intactId="EBI-714379">
        <id>Q9Y2M5</id>
    </interactant>
    <interactant intactId="EBI-351506">
        <id>P06396</id>
        <label>GSN</label>
    </interactant>
    <organismsDiffer>false</organismsDiffer>
    <experiments>3</experiments>
</comment>
<comment type="interaction">
    <interactant intactId="EBI-714379">
        <id>Q9Y2M5</id>
    </interactant>
    <interactant intactId="EBI-352682">
        <id>P04792</id>
        <label>HSPB1</label>
    </interactant>
    <organismsDiffer>false</organismsDiffer>
    <experiments>3</experiments>
</comment>
<comment type="interaction">
    <interactant intactId="EBI-714379">
        <id>Q9Y2M5</id>
    </interactant>
    <interactant intactId="EBI-517086">
        <id>O43464</id>
        <label>HTRA2</label>
    </interactant>
    <organismsDiffer>false</organismsDiffer>
    <experiments>3</experiments>
</comment>
<comment type="interaction">
    <interactant intactId="EBI-714379">
        <id>Q9Y2M5</id>
    </interactant>
    <interactant intactId="EBI-466029">
        <id>P42858</id>
        <label>HTT</label>
    </interactant>
    <organismsDiffer>false</organismsDiffer>
    <experiments>9</experiments>
</comment>
<comment type="interaction">
    <interactant intactId="EBI-714379">
        <id>Q9Y2M5</id>
    </interactant>
    <interactant intactId="EBI-715774">
        <id>Q9Y6Y0</id>
        <label>IVNS1ABP</label>
    </interactant>
    <organismsDiffer>false</organismsDiffer>
    <experiments>9</experiments>
</comment>
<comment type="interaction">
    <interactant intactId="EBI-714379">
        <id>Q9Y2M5</id>
    </interactant>
    <interactant intactId="EBI-10975473">
        <id>O60333-2</id>
        <label>KIF1B</label>
    </interactant>
    <organismsDiffer>false</organismsDiffer>
    <experiments>3</experiments>
</comment>
<comment type="interaction">
    <interactant intactId="EBI-714379">
        <id>Q9Y2M5</id>
    </interactant>
    <interactant intactId="EBI-948266">
        <id>O14901</id>
        <label>KLF11</label>
    </interactant>
    <organismsDiffer>false</organismsDiffer>
    <experiments>3</experiments>
</comment>
<comment type="interaction">
    <interactant intactId="EBI-714379">
        <id>Q9Y2M5</id>
    </interactant>
    <interactant intactId="EBI-2432309">
        <id>Q92876</id>
        <label>KLK6</label>
    </interactant>
    <organismsDiffer>false</organismsDiffer>
    <experiments>3</experiments>
</comment>
<comment type="interaction">
    <interactant intactId="EBI-714379">
        <id>Q9Y2M5</id>
    </interactant>
    <interactant intactId="EBI-1189067">
        <id>P51608</id>
        <label>MECP2</label>
    </interactant>
    <organismsDiffer>false</organismsDiffer>
    <experiments>4</experiments>
</comment>
<comment type="interaction">
    <interactant intactId="EBI-714379">
        <id>Q9Y2M5</id>
    </interactant>
    <interactant intactId="EBI-713665">
        <id>P19404</id>
        <label>NDUFV2</label>
    </interactant>
    <organismsDiffer>false</organismsDiffer>
    <experiments>3</experiments>
</comment>
<comment type="interaction">
    <interactant intactId="EBI-714379">
        <id>Q9Y2M5</id>
    </interactant>
    <interactant intactId="EBI-1391623">
        <id>P29474</id>
        <label>NOS3</label>
    </interactant>
    <organismsDiffer>false</organismsDiffer>
    <experiments>3</experiments>
</comment>
<comment type="interaction">
    <interactant intactId="EBI-714379">
        <id>Q9Y2M5</id>
    </interactant>
    <interactant intactId="EBI-1307">
        <id>Q13153</id>
        <label>PAK1</label>
    </interactant>
    <organismsDiffer>false</organismsDiffer>
    <experiments>3</experiments>
</comment>
<comment type="interaction">
    <interactant intactId="EBI-714379">
        <id>Q9Y2M5</id>
    </interactant>
    <interactant intactId="EBI-721853">
        <id>O14832</id>
        <label>PHYH</label>
    </interactant>
    <organismsDiffer>false</organismsDiffer>
    <experiments>3</experiments>
</comment>
<comment type="interaction">
    <interactant intactId="EBI-714379">
        <id>Q9Y2M5</id>
    </interactant>
    <interactant intactId="EBI-295890">
        <id>P29590</id>
        <label>PML</label>
    </interactant>
    <organismsDiffer>false</organismsDiffer>
    <experiments>11</experiments>
</comment>
<comment type="interaction">
    <interactant intactId="EBI-714379">
        <id>Q9Y2M5</id>
    </interactant>
    <interactant intactId="EBI-303992">
        <id>P29590-1</id>
        <label>PML</label>
    </interactant>
    <organismsDiffer>false</organismsDiffer>
    <experiments>3</experiments>
</comment>
<comment type="interaction">
    <interactant intactId="EBI-714379">
        <id>Q9Y2M5</id>
    </interactant>
    <interactant intactId="EBI-50433196">
        <id>A0A6Q8PF08</id>
        <label>PMP22</label>
    </interactant>
    <organismsDiffer>false</organismsDiffer>
    <experiments>3</experiments>
</comment>
<comment type="interaction">
    <interactant intactId="EBI-714379">
        <id>Q9Y2M5</id>
    </interactant>
    <interactant intactId="EBI-21251460">
        <id>O60260-5</id>
        <label>PRKN</label>
    </interactant>
    <organismsDiffer>false</organismsDiffer>
    <experiments>3</experiments>
</comment>
<comment type="interaction">
    <interactant intactId="EBI-714379">
        <id>Q9Y2M5</id>
    </interactant>
    <interactant intactId="EBI-912440">
        <id>Q96LA8</id>
        <label>PRMT6</label>
    </interactant>
    <organismsDiffer>false</organismsDiffer>
    <experiments>2</experiments>
</comment>
<comment type="interaction">
    <interactant intactId="EBI-714379">
        <id>Q9Y2M5</id>
    </interactant>
    <interactant intactId="EBI-749195">
        <id>P60891</id>
        <label>PRPS1</label>
    </interactant>
    <organismsDiffer>false</organismsDiffer>
    <experiments>3</experiments>
</comment>
<comment type="interaction">
    <interactant intactId="EBI-714379">
        <id>Q9Y2M5</id>
    </interactant>
    <interactant intactId="EBI-396669">
        <id>Q9Y3C5</id>
        <label>RNF11</label>
    </interactant>
    <organismsDiffer>false</organismsDiffer>
    <experiments>3</experiments>
</comment>
<comment type="interaction">
    <interactant intactId="EBI-714379">
        <id>Q9Y2M5</id>
    </interactant>
    <interactant intactId="EBI-985879">
        <id>P37840</id>
        <label>SNCA</label>
    </interactant>
    <organismsDiffer>false</organismsDiffer>
    <experiments>3</experiments>
</comment>
<comment type="interaction">
    <interactant intactId="EBI-714379">
        <id>Q9Y2M5</id>
    </interactant>
    <interactant intactId="EBI-5235340">
        <id>Q7Z699</id>
        <label>SPRED1</label>
    </interactant>
    <organismsDiffer>false</organismsDiffer>
    <experiments>3</experiments>
</comment>
<comment type="interaction">
    <interactant intactId="EBI-714379">
        <id>Q9Y2M5</id>
    </interactant>
    <interactant intactId="EBI-372899">
        <id>Q13148</id>
        <label>TARDBP</label>
    </interactant>
    <organismsDiffer>false</organismsDiffer>
    <experiments>3</experiments>
</comment>
<comment type="interaction">
    <interactant intactId="EBI-714379">
        <id>Q9Y2M5</id>
    </interactant>
    <interactant intactId="EBI-12806590">
        <id>Q86WV8</id>
        <label>TSC1</label>
    </interactant>
    <organismsDiffer>false</organismsDiffer>
    <experiments>3</experiments>
</comment>
<comment type="interaction">
    <interactant intactId="EBI-714379">
        <id>Q9Y2M5</id>
    </interactant>
    <interactant intactId="EBI-711909">
        <id>P02766</id>
        <label>TTR</label>
    </interactant>
    <organismsDiffer>false</organismsDiffer>
    <experiments>3</experiments>
</comment>
<comment type="interaction">
    <interactant intactId="EBI-714379">
        <id>Q9Y2M5</id>
    </interactant>
    <interactant intactId="EBI-720609">
        <id>O76024</id>
        <label>WFS1</label>
    </interactant>
    <organismsDiffer>false</organismsDiffer>
    <experiments>3</experiments>
</comment>
<comment type="subcellular location">
    <subcellularLocation>
        <location>Cytoplasm</location>
        <location>Perinuclear region</location>
    </subcellularLocation>
    <subcellularLocation>
        <location>Nucleus</location>
    </subcellularLocation>
    <subcellularLocation>
        <location>Golgi apparatus</location>
        <location>trans-Golgi network</location>
    </subcellularLocation>
    <subcellularLocation>
        <location evidence="1">Cell projection</location>
        <location evidence="1">Axon</location>
    </subcellularLocation>
    <subcellularLocation>
        <location evidence="1">Cell projection</location>
        <location evidence="1">Dendrite</location>
    </subcellularLocation>
    <text evidence="6">Localizes in the perinuclear region in normal conditions. Following IFN-alpha or IFN-gamma treatment, it is relocalized and sequestrated to the PML nuclear bodies, preventing DAPK1 ubiquitination (PubMed:20389280).</text>
</comment>
<comment type="alternative products">
    <event type="alternative splicing"/>
    <isoform>
        <id>Q9Y2M5-1</id>
        <name>1</name>
        <sequence type="displayed"/>
    </isoform>
    <isoform>
        <id>Q9Y2M5-2</id>
        <name>2</name>
        <sequence type="described" ref="VSP_057026 VSP_057027"/>
    </isoform>
</comment>
<comment type="induction">
    <text evidence="8">By hypoxia.</text>
</comment>
<organism>
    <name type="scientific">Homo sapiens</name>
    <name type="common">Human</name>
    <dbReference type="NCBI Taxonomy" id="9606"/>
    <lineage>
        <taxon>Eukaryota</taxon>
        <taxon>Metazoa</taxon>
        <taxon>Chordata</taxon>
        <taxon>Craniata</taxon>
        <taxon>Vertebrata</taxon>
        <taxon>Euteleostomi</taxon>
        <taxon>Mammalia</taxon>
        <taxon>Eutheria</taxon>
        <taxon>Euarchontoglires</taxon>
        <taxon>Primates</taxon>
        <taxon>Haplorrhini</taxon>
        <taxon>Catarrhini</taxon>
        <taxon>Hominidae</taxon>
        <taxon>Homo</taxon>
    </lineage>
</organism>
<dbReference type="EMBL" id="AJ844466">
    <property type="protein sequence ID" value="CAH59617.1"/>
    <property type="molecule type" value="mRNA"/>
</dbReference>
<dbReference type="EMBL" id="AB026190">
    <property type="protein sequence ID" value="BAA77027.1"/>
    <property type="molecule type" value="mRNA"/>
</dbReference>
<dbReference type="EMBL" id="AK001430">
    <property type="protein sequence ID" value="BAG50912.1"/>
    <property type="molecule type" value="mRNA"/>
</dbReference>
<dbReference type="EMBL" id="AK300755">
    <property type="protein sequence ID" value="BAG62422.1"/>
    <property type="molecule type" value="mRNA"/>
</dbReference>
<dbReference type="EMBL" id="AL109921">
    <property type="status" value="NOT_ANNOTATED_CDS"/>
    <property type="molecule type" value="Genomic_DNA"/>
</dbReference>
<dbReference type="EMBL" id="BX248409">
    <property type="status" value="NOT_ANNOTATED_CDS"/>
    <property type="molecule type" value="Genomic_DNA"/>
</dbReference>
<dbReference type="EMBL" id="BC063418">
    <property type="protein sequence ID" value="AAH63418.1"/>
    <property type="molecule type" value="mRNA"/>
</dbReference>
<dbReference type="CCDS" id="CCDS1310.1">
    <molecule id="Q9Y2M5-1"/>
</dbReference>
<dbReference type="RefSeq" id="NP_055273.2">
    <molecule id="Q9Y2M5-1"/>
    <property type="nucleotide sequence ID" value="NM_014458.3"/>
</dbReference>
<dbReference type="RefSeq" id="XP_005245150.1">
    <molecule id="Q9Y2M5-1"/>
    <property type="nucleotide sequence ID" value="XM_005245093.5"/>
</dbReference>
<dbReference type="RefSeq" id="XP_024302236.1">
    <molecule id="Q9Y2M5-2"/>
    <property type="nucleotide sequence ID" value="XM_024446468.2"/>
</dbReference>
<dbReference type="RefSeq" id="XP_024302240.1">
    <molecule id="Q9Y2M5-2"/>
    <property type="nucleotide sequence ID" value="XM_024446472.2"/>
</dbReference>
<dbReference type="RefSeq" id="XP_054192019.1">
    <molecule id="Q9Y2M5-1"/>
    <property type="nucleotide sequence ID" value="XM_054336044.1"/>
</dbReference>
<dbReference type="RefSeq" id="XP_054192022.1">
    <molecule id="Q9Y2M5-2"/>
    <property type="nucleotide sequence ID" value="XM_054336047.1"/>
</dbReference>
<dbReference type="RefSeq" id="XP_054192023.1">
    <molecule id="Q9Y2M5-2"/>
    <property type="nucleotide sequence ID" value="XM_054336048.1"/>
</dbReference>
<dbReference type="PDB" id="5YQ4">
    <property type="method" value="X-ray"/>
    <property type="resolution" value="1.58 A"/>
    <property type="chains" value="A=303-600"/>
</dbReference>
<dbReference type="PDB" id="6GY5">
    <property type="method" value="X-ray"/>
    <property type="resolution" value="1.09 A"/>
    <property type="chains" value="A=303-605"/>
</dbReference>
<dbReference type="PDB" id="8CIA">
    <property type="method" value="X-ray"/>
    <property type="resolution" value="3.72 A"/>
    <property type="chains" value="A/C/D=299-605"/>
</dbReference>
<dbReference type="PDBsum" id="5YQ4"/>
<dbReference type="PDBsum" id="6GY5"/>
<dbReference type="PDBsum" id="8CIA"/>
<dbReference type="SMR" id="Q9Y2M5"/>
<dbReference type="BioGRID" id="118100">
    <property type="interactions" value="228"/>
</dbReference>
<dbReference type="ComplexPortal" id="CPX-8109">
    <property type="entry name" value="CRL3 E3 ubiquitin ligase complex, KLHL20 variant"/>
</dbReference>
<dbReference type="CORUM" id="Q9Y2M5"/>
<dbReference type="FunCoup" id="Q9Y2M5">
    <property type="interactions" value="3250"/>
</dbReference>
<dbReference type="IntAct" id="Q9Y2M5">
    <property type="interactions" value="181"/>
</dbReference>
<dbReference type="MINT" id="Q9Y2M5"/>
<dbReference type="STRING" id="9606.ENSP00000209884"/>
<dbReference type="GlyGen" id="Q9Y2M5">
    <property type="glycosylation" value="1 site, 1 O-linked glycan (1 site)"/>
</dbReference>
<dbReference type="iPTMnet" id="Q9Y2M5"/>
<dbReference type="PhosphoSitePlus" id="Q9Y2M5"/>
<dbReference type="BioMuta" id="KLHL20"/>
<dbReference type="DMDM" id="257051084"/>
<dbReference type="jPOST" id="Q9Y2M5"/>
<dbReference type="MassIVE" id="Q9Y2M5"/>
<dbReference type="PaxDb" id="9606-ENSP00000209884"/>
<dbReference type="PeptideAtlas" id="Q9Y2M5"/>
<dbReference type="ProteomicsDB" id="5204"/>
<dbReference type="ProteomicsDB" id="85844">
    <molecule id="Q9Y2M5-1"/>
</dbReference>
<dbReference type="Pumba" id="Q9Y2M5"/>
<dbReference type="Antibodypedia" id="20562">
    <property type="antibodies" value="106 antibodies from 20 providers"/>
</dbReference>
<dbReference type="DNASU" id="27252"/>
<dbReference type="Ensembl" id="ENST00000209884.5">
    <molecule id="Q9Y2M5-1"/>
    <property type="protein sequence ID" value="ENSP00000209884.4"/>
    <property type="gene ID" value="ENSG00000076321.11"/>
</dbReference>
<dbReference type="GeneID" id="27252"/>
<dbReference type="KEGG" id="hsa:27252"/>
<dbReference type="MANE-Select" id="ENST00000209884.5">
    <property type="protein sequence ID" value="ENSP00000209884.4"/>
    <property type="RefSeq nucleotide sequence ID" value="NM_014458.4"/>
    <property type="RefSeq protein sequence ID" value="NP_055273.2"/>
</dbReference>
<dbReference type="UCSC" id="uc001gjc.5">
    <molecule id="Q9Y2M5-1"/>
    <property type="organism name" value="human"/>
</dbReference>
<dbReference type="AGR" id="HGNC:25056"/>
<dbReference type="CTD" id="27252"/>
<dbReference type="DisGeNET" id="27252"/>
<dbReference type="GeneCards" id="KLHL20"/>
<dbReference type="HGNC" id="HGNC:25056">
    <property type="gene designation" value="KLHL20"/>
</dbReference>
<dbReference type="HPA" id="ENSG00000076321">
    <property type="expression patterns" value="Low tissue specificity"/>
</dbReference>
<dbReference type="MalaCards" id="KLHL20"/>
<dbReference type="MIM" id="617679">
    <property type="type" value="gene"/>
</dbReference>
<dbReference type="neXtProt" id="NX_Q9Y2M5"/>
<dbReference type="OpenTargets" id="ENSG00000076321"/>
<dbReference type="PharmGKB" id="PA134982126"/>
<dbReference type="VEuPathDB" id="HostDB:ENSG00000076321"/>
<dbReference type="eggNOG" id="KOG4441">
    <property type="taxonomic scope" value="Eukaryota"/>
</dbReference>
<dbReference type="GeneTree" id="ENSGT00940000155161"/>
<dbReference type="HOGENOM" id="CLU_004253_14_2_1"/>
<dbReference type="InParanoid" id="Q9Y2M5"/>
<dbReference type="OMA" id="CAVFNNL"/>
<dbReference type="OrthoDB" id="45365at2759"/>
<dbReference type="PAN-GO" id="Q9Y2M5">
    <property type="GO annotations" value="6 GO annotations based on evolutionary models"/>
</dbReference>
<dbReference type="PhylomeDB" id="Q9Y2M5"/>
<dbReference type="TreeFam" id="TF329218"/>
<dbReference type="PathwayCommons" id="Q9Y2M5"/>
<dbReference type="Reactome" id="R-HSA-8951664">
    <property type="pathway name" value="Neddylation"/>
</dbReference>
<dbReference type="Reactome" id="R-HSA-983168">
    <property type="pathway name" value="Antigen processing: Ubiquitination &amp; Proteasome degradation"/>
</dbReference>
<dbReference type="SignaLink" id="Q9Y2M5"/>
<dbReference type="SIGNOR" id="Q9Y2M5"/>
<dbReference type="UniPathway" id="UPA00143"/>
<dbReference type="BioGRID-ORCS" id="27252">
    <property type="hits" value="17 hits in 1218 CRISPR screens"/>
</dbReference>
<dbReference type="ChiTaRS" id="KLHL20">
    <property type="organism name" value="human"/>
</dbReference>
<dbReference type="GeneWiki" id="KLHL20"/>
<dbReference type="GenomeRNAi" id="27252"/>
<dbReference type="Pharos" id="Q9Y2M5">
    <property type="development level" value="Tbio"/>
</dbReference>
<dbReference type="PRO" id="PR:Q9Y2M5"/>
<dbReference type="Proteomes" id="UP000005640">
    <property type="component" value="Chromosome 1"/>
</dbReference>
<dbReference type="RNAct" id="Q9Y2M5">
    <property type="molecule type" value="protein"/>
</dbReference>
<dbReference type="Bgee" id="ENSG00000076321">
    <property type="expression patterns" value="Expressed in secondary oocyte and 207 other cell types or tissues"/>
</dbReference>
<dbReference type="GO" id="GO:0015629">
    <property type="term" value="C:actin cytoskeleton"/>
    <property type="evidence" value="ECO:0000304"/>
    <property type="project" value="ProtInc"/>
</dbReference>
<dbReference type="GO" id="GO:0030424">
    <property type="term" value="C:axon"/>
    <property type="evidence" value="ECO:0007669"/>
    <property type="project" value="UniProtKB-SubCell"/>
</dbReference>
<dbReference type="GO" id="GO:0031463">
    <property type="term" value="C:Cul3-RING ubiquitin ligase complex"/>
    <property type="evidence" value="ECO:0000314"/>
    <property type="project" value="UniProtKB"/>
</dbReference>
<dbReference type="GO" id="GO:0005737">
    <property type="term" value="C:cytoplasm"/>
    <property type="evidence" value="ECO:0000314"/>
    <property type="project" value="UniProtKB"/>
</dbReference>
<dbReference type="GO" id="GO:0005829">
    <property type="term" value="C:cytosol"/>
    <property type="evidence" value="ECO:0000314"/>
    <property type="project" value="HPA"/>
</dbReference>
<dbReference type="GO" id="GO:0030425">
    <property type="term" value="C:dendrite"/>
    <property type="evidence" value="ECO:0007669"/>
    <property type="project" value="UniProtKB-SubCell"/>
</dbReference>
<dbReference type="GO" id="GO:0005794">
    <property type="term" value="C:Golgi apparatus"/>
    <property type="evidence" value="ECO:0000314"/>
    <property type="project" value="HPA"/>
</dbReference>
<dbReference type="GO" id="GO:0048471">
    <property type="term" value="C:perinuclear region of cytoplasm"/>
    <property type="evidence" value="ECO:0007669"/>
    <property type="project" value="UniProtKB-SubCell"/>
</dbReference>
<dbReference type="GO" id="GO:0016605">
    <property type="term" value="C:PML body"/>
    <property type="evidence" value="ECO:0000314"/>
    <property type="project" value="UniProtKB"/>
</dbReference>
<dbReference type="GO" id="GO:0005802">
    <property type="term" value="C:trans-Golgi network"/>
    <property type="evidence" value="ECO:0000314"/>
    <property type="project" value="UniProtKB"/>
</dbReference>
<dbReference type="GO" id="GO:0003779">
    <property type="term" value="F:actin binding"/>
    <property type="evidence" value="ECO:0007669"/>
    <property type="project" value="UniProtKB-KW"/>
</dbReference>
<dbReference type="GO" id="GO:0019964">
    <property type="term" value="F:type II interferon binding"/>
    <property type="evidence" value="ECO:0000314"/>
    <property type="project" value="UniProtKB"/>
</dbReference>
<dbReference type="GO" id="GO:1990756">
    <property type="term" value="F:ubiquitin-like ligase-substrate adaptor activity"/>
    <property type="evidence" value="ECO:0000318"/>
    <property type="project" value="GO_Central"/>
</dbReference>
<dbReference type="GO" id="GO:0004842">
    <property type="term" value="F:ubiquitin-protein transferase activity"/>
    <property type="evidence" value="ECO:0000314"/>
    <property type="project" value="UniProtKB"/>
</dbReference>
<dbReference type="GO" id="GO:0007010">
    <property type="term" value="P:cytoskeleton organization"/>
    <property type="evidence" value="ECO:0000304"/>
    <property type="project" value="ProtInc"/>
</dbReference>
<dbReference type="GO" id="GO:0006895">
    <property type="term" value="P:Golgi to endosome transport"/>
    <property type="evidence" value="ECO:0000315"/>
    <property type="project" value="UniProtKB"/>
</dbReference>
<dbReference type="GO" id="GO:0043066">
    <property type="term" value="P:negative regulation of apoptotic process"/>
    <property type="evidence" value="ECO:0000315"/>
    <property type="project" value="UniProtKB"/>
</dbReference>
<dbReference type="GO" id="GO:0043161">
    <property type="term" value="P:proteasome-mediated ubiquitin-dependent protein catabolic process"/>
    <property type="evidence" value="ECO:0000314"/>
    <property type="project" value="UniProtKB"/>
</dbReference>
<dbReference type="GO" id="GO:1990390">
    <property type="term" value="P:protein K33-linked ubiquitination"/>
    <property type="evidence" value="ECO:0000314"/>
    <property type="project" value="UniProtKB"/>
</dbReference>
<dbReference type="GO" id="GO:0015031">
    <property type="term" value="P:protein transport"/>
    <property type="evidence" value="ECO:0007669"/>
    <property type="project" value="UniProtKB-KW"/>
</dbReference>
<dbReference type="GO" id="GO:0016567">
    <property type="term" value="P:protein ubiquitination"/>
    <property type="evidence" value="ECO:0000314"/>
    <property type="project" value="UniProtKB"/>
</dbReference>
<dbReference type="GO" id="GO:0035455">
    <property type="term" value="P:response to interferon-alpha"/>
    <property type="evidence" value="ECO:0000304"/>
    <property type="project" value="UniProtKB"/>
</dbReference>
<dbReference type="CDD" id="cd18459">
    <property type="entry name" value="BACK_KLHL20"/>
    <property type="match status" value="1"/>
</dbReference>
<dbReference type="CDD" id="cd18249">
    <property type="entry name" value="BTB_POZ_KLHL20_KLEIP"/>
    <property type="match status" value="1"/>
</dbReference>
<dbReference type="FunFam" id="1.25.40.420:FF:000001">
    <property type="entry name" value="Kelch-like family member 12"/>
    <property type="match status" value="1"/>
</dbReference>
<dbReference type="FunFam" id="2.120.10.80:FF:000006">
    <property type="entry name" value="Kelch-like family member 20"/>
    <property type="match status" value="1"/>
</dbReference>
<dbReference type="FunFam" id="3.30.710.10:FF:000001">
    <property type="entry name" value="Kelch-like family member 20"/>
    <property type="match status" value="1"/>
</dbReference>
<dbReference type="Gene3D" id="1.25.40.420">
    <property type="match status" value="1"/>
</dbReference>
<dbReference type="Gene3D" id="2.120.10.80">
    <property type="entry name" value="Kelch-type beta propeller"/>
    <property type="match status" value="1"/>
</dbReference>
<dbReference type="Gene3D" id="3.30.710.10">
    <property type="entry name" value="Potassium Channel Kv1.1, Chain A"/>
    <property type="match status" value="1"/>
</dbReference>
<dbReference type="InterPro" id="IPR011705">
    <property type="entry name" value="BACK"/>
</dbReference>
<dbReference type="InterPro" id="IPR017096">
    <property type="entry name" value="BTB-kelch_protein"/>
</dbReference>
<dbReference type="InterPro" id="IPR000210">
    <property type="entry name" value="BTB/POZ_dom"/>
</dbReference>
<dbReference type="InterPro" id="IPR015915">
    <property type="entry name" value="Kelch-typ_b-propeller"/>
</dbReference>
<dbReference type="InterPro" id="IPR006652">
    <property type="entry name" value="Kelch_1"/>
</dbReference>
<dbReference type="InterPro" id="IPR011333">
    <property type="entry name" value="SKP1/BTB/POZ_sf"/>
</dbReference>
<dbReference type="PANTHER" id="PTHR24412">
    <property type="entry name" value="KELCH PROTEIN"/>
    <property type="match status" value="1"/>
</dbReference>
<dbReference type="PANTHER" id="PTHR24412:SF451">
    <property type="entry name" value="KELCH-LIKE PROTEIN 20"/>
    <property type="match status" value="1"/>
</dbReference>
<dbReference type="Pfam" id="PF07707">
    <property type="entry name" value="BACK"/>
    <property type="match status" value="1"/>
</dbReference>
<dbReference type="Pfam" id="PF00651">
    <property type="entry name" value="BTB"/>
    <property type="match status" value="1"/>
</dbReference>
<dbReference type="Pfam" id="PF01344">
    <property type="entry name" value="Kelch_1"/>
    <property type="match status" value="2"/>
</dbReference>
<dbReference type="Pfam" id="PF24681">
    <property type="entry name" value="Kelch_KLHDC2_KLHL20_DRC7"/>
    <property type="match status" value="1"/>
</dbReference>
<dbReference type="PIRSF" id="PIRSF037037">
    <property type="entry name" value="Kelch-like_protein_gigaxonin"/>
    <property type="match status" value="1"/>
</dbReference>
<dbReference type="PRINTS" id="PR00501">
    <property type="entry name" value="KELCHREPEAT"/>
</dbReference>
<dbReference type="SMART" id="SM00875">
    <property type="entry name" value="BACK"/>
    <property type="match status" value="1"/>
</dbReference>
<dbReference type="SMART" id="SM00225">
    <property type="entry name" value="BTB"/>
    <property type="match status" value="1"/>
</dbReference>
<dbReference type="SMART" id="SM00612">
    <property type="entry name" value="Kelch"/>
    <property type="match status" value="6"/>
</dbReference>
<dbReference type="SUPFAM" id="SSF117281">
    <property type="entry name" value="Kelch motif"/>
    <property type="match status" value="1"/>
</dbReference>
<dbReference type="SUPFAM" id="SSF54695">
    <property type="entry name" value="POZ domain"/>
    <property type="match status" value="1"/>
</dbReference>
<dbReference type="PROSITE" id="PS50097">
    <property type="entry name" value="BTB"/>
    <property type="match status" value="1"/>
</dbReference>
<sequence>MEGKPMRRCTNIRPGETGMDVTSRCTLGDPNKLPEGVPQPARMPYISDKHPRQTLEVINLLRKHRELCDVVLVVGAKKIYAHRVILSACSPYFRAMFTGELAESRQTEVVIRDIDERAMELLIDFAYTSQITVEEGNVQTLLPAACLLQLAEIQEACCEFLKRQLDPSNCLGIRAFADTHSCRELLRIADKFTQHNFQEVMESEEFMLLPANQLIDIISSDELNVRSEEQVFNAVMAWVKYSIQERRPQLPQVLQHVRLPLLSPKFLVGTVGSDPLIKSDEECRDLVDEAKNYLLLPQERPLMQGPRTRPRKPIRCGEVLFAVGGWCSGDAISSVERYDPQTNEWRMVASMSKRRCGVGVSVLDDLLYAVGGHDGSSYLNSVERYDPKTNQWSSDVAPTSTCRTSVGVAVLGGFLYAVGGQDGVSCLNIVERYDPKENKWTRVASMSTRRLGVAVAVLGGFLYAVGGSDGTSPLNTVERYNPQENRWHTIAPMGTRRKHLGCAVYQDMIYAVGGRDDTTELSSAERYNPRTNQWSPVVAMTSRRSGVGLAVVNGQLMAVGGFDGTTYLKTIEVFDPDANTWRLYGGMNYRRLGGGVGVIKMTHCESHIW</sequence>
<name>KLH20_HUMAN</name>
<protein>
    <recommendedName>
        <fullName>Kelch-like protein 20</fullName>
    </recommendedName>
    <alternativeName>
        <fullName>Kelch-like ECT2-interacting protein</fullName>
    </alternativeName>
    <alternativeName>
        <fullName>Kelch-like protein X</fullName>
    </alternativeName>
</protein>
<reference key="1">
    <citation type="journal article" date="2004" name="Mol. Biol. Cell">
        <title>Novel kelch-like protein, KLEIP, is involved in actin assembly at cell-cell contact sites of Madin-Darby canine kidney cells.</title>
        <authorList>
            <person name="Hara T."/>
            <person name="Ishida H."/>
            <person name="Raziuddin R."/>
            <person name="Dorkhom S."/>
            <person name="Kamijo K."/>
            <person name="Miki T."/>
        </authorList>
    </citation>
    <scope>NUCLEOTIDE SEQUENCE [MRNA] (ISOFORM 1)</scope>
    <scope>INTERACTION WITH ACTIN</scope>
</reference>
<reference key="2">
    <citation type="submission" date="1999-04" db="EMBL/GenBank/DDBJ databases">
        <title>Kelch motif containing protein.</title>
        <authorList>
            <person name="Yoshida K."/>
            <person name="Sugano S."/>
        </authorList>
    </citation>
    <scope>NUCLEOTIDE SEQUENCE [MRNA] (ISOFORM 1)</scope>
    <source>
        <tissue>Brain</tissue>
    </source>
</reference>
<reference key="3">
    <citation type="journal article" date="2004" name="Nat. Genet.">
        <title>Complete sequencing and characterization of 21,243 full-length human cDNAs.</title>
        <authorList>
            <person name="Ota T."/>
            <person name="Suzuki Y."/>
            <person name="Nishikawa T."/>
            <person name="Otsuki T."/>
            <person name="Sugiyama T."/>
            <person name="Irie R."/>
            <person name="Wakamatsu A."/>
            <person name="Hayashi K."/>
            <person name="Sato H."/>
            <person name="Nagai K."/>
            <person name="Kimura K."/>
            <person name="Makita H."/>
            <person name="Sekine M."/>
            <person name="Obayashi M."/>
            <person name="Nishi T."/>
            <person name="Shibahara T."/>
            <person name="Tanaka T."/>
            <person name="Ishii S."/>
            <person name="Yamamoto J."/>
            <person name="Saito K."/>
            <person name="Kawai Y."/>
            <person name="Isono Y."/>
            <person name="Nakamura Y."/>
            <person name="Nagahari K."/>
            <person name="Murakami K."/>
            <person name="Yasuda T."/>
            <person name="Iwayanagi T."/>
            <person name="Wagatsuma M."/>
            <person name="Shiratori A."/>
            <person name="Sudo H."/>
            <person name="Hosoiri T."/>
            <person name="Kaku Y."/>
            <person name="Kodaira H."/>
            <person name="Kondo H."/>
            <person name="Sugawara M."/>
            <person name="Takahashi M."/>
            <person name="Kanda K."/>
            <person name="Yokoi T."/>
            <person name="Furuya T."/>
            <person name="Kikkawa E."/>
            <person name="Omura Y."/>
            <person name="Abe K."/>
            <person name="Kamihara K."/>
            <person name="Katsuta N."/>
            <person name="Sato K."/>
            <person name="Tanikawa M."/>
            <person name="Yamazaki M."/>
            <person name="Ninomiya K."/>
            <person name="Ishibashi T."/>
            <person name="Yamashita H."/>
            <person name="Murakawa K."/>
            <person name="Fujimori K."/>
            <person name="Tanai H."/>
            <person name="Kimata M."/>
            <person name="Watanabe M."/>
            <person name="Hiraoka S."/>
            <person name="Chiba Y."/>
            <person name="Ishida S."/>
            <person name="Ono Y."/>
            <person name="Takiguchi S."/>
            <person name="Watanabe S."/>
            <person name="Yosida M."/>
            <person name="Hotuta T."/>
            <person name="Kusano J."/>
            <person name="Kanehori K."/>
            <person name="Takahashi-Fujii A."/>
            <person name="Hara H."/>
            <person name="Tanase T.-O."/>
            <person name="Nomura Y."/>
            <person name="Togiya S."/>
            <person name="Komai F."/>
            <person name="Hara R."/>
            <person name="Takeuchi K."/>
            <person name="Arita M."/>
            <person name="Imose N."/>
            <person name="Musashino K."/>
            <person name="Yuuki H."/>
            <person name="Oshima A."/>
            <person name="Sasaki N."/>
            <person name="Aotsuka S."/>
            <person name="Yoshikawa Y."/>
            <person name="Matsunawa H."/>
            <person name="Ichihara T."/>
            <person name="Shiohata N."/>
            <person name="Sano S."/>
            <person name="Moriya S."/>
            <person name="Momiyama H."/>
            <person name="Satoh N."/>
            <person name="Takami S."/>
            <person name="Terashima Y."/>
            <person name="Suzuki O."/>
            <person name="Nakagawa S."/>
            <person name="Senoh A."/>
            <person name="Mizoguchi H."/>
            <person name="Goto Y."/>
            <person name="Shimizu F."/>
            <person name="Wakebe H."/>
            <person name="Hishigaki H."/>
            <person name="Watanabe T."/>
            <person name="Sugiyama A."/>
            <person name="Takemoto M."/>
            <person name="Kawakami B."/>
            <person name="Yamazaki M."/>
            <person name="Watanabe K."/>
            <person name="Kumagai A."/>
            <person name="Itakura S."/>
            <person name="Fukuzumi Y."/>
            <person name="Fujimori Y."/>
            <person name="Komiyama M."/>
            <person name="Tashiro H."/>
            <person name="Tanigami A."/>
            <person name="Fujiwara T."/>
            <person name="Ono T."/>
            <person name="Yamada K."/>
            <person name="Fujii Y."/>
            <person name="Ozaki K."/>
            <person name="Hirao M."/>
            <person name="Ohmori Y."/>
            <person name="Kawabata A."/>
            <person name="Hikiji T."/>
            <person name="Kobatake N."/>
            <person name="Inagaki H."/>
            <person name="Ikema Y."/>
            <person name="Okamoto S."/>
            <person name="Okitani R."/>
            <person name="Kawakami T."/>
            <person name="Noguchi S."/>
            <person name="Itoh T."/>
            <person name="Shigeta K."/>
            <person name="Senba T."/>
            <person name="Matsumura K."/>
            <person name="Nakajima Y."/>
            <person name="Mizuno T."/>
            <person name="Morinaga M."/>
            <person name="Sasaki M."/>
            <person name="Togashi T."/>
            <person name="Oyama M."/>
            <person name="Hata H."/>
            <person name="Watanabe M."/>
            <person name="Komatsu T."/>
            <person name="Mizushima-Sugano J."/>
            <person name="Satoh T."/>
            <person name="Shirai Y."/>
            <person name="Takahashi Y."/>
            <person name="Nakagawa K."/>
            <person name="Okumura K."/>
            <person name="Nagase T."/>
            <person name="Nomura N."/>
            <person name="Kikuchi H."/>
            <person name="Masuho Y."/>
            <person name="Yamashita R."/>
            <person name="Nakai K."/>
            <person name="Yada T."/>
            <person name="Nakamura Y."/>
            <person name="Ohara O."/>
            <person name="Isogai T."/>
            <person name="Sugano S."/>
        </authorList>
    </citation>
    <scope>NUCLEOTIDE SEQUENCE [LARGE SCALE MRNA] (ISOFORMS 1 AND 2)</scope>
    <source>
        <tissue>Teratocarcinoma</tissue>
    </source>
</reference>
<reference key="4">
    <citation type="journal article" date="2006" name="Nature">
        <title>The DNA sequence and biological annotation of human chromosome 1.</title>
        <authorList>
            <person name="Gregory S.G."/>
            <person name="Barlow K.F."/>
            <person name="McLay K.E."/>
            <person name="Kaul R."/>
            <person name="Swarbreck D."/>
            <person name="Dunham A."/>
            <person name="Scott C.E."/>
            <person name="Howe K.L."/>
            <person name="Woodfine K."/>
            <person name="Spencer C.C.A."/>
            <person name="Jones M.C."/>
            <person name="Gillson C."/>
            <person name="Searle S."/>
            <person name="Zhou Y."/>
            <person name="Kokocinski F."/>
            <person name="McDonald L."/>
            <person name="Evans R."/>
            <person name="Phillips K."/>
            <person name="Atkinson A."/>
            <person name="Cooper R."/>
            <person name="Jones C."/>
            <person name="Hall R.E."/>
            <person name="Andrews T.D."/>
            <person name="Lloyd C."/>
            <person name="Ainscough R."/>
            <person name="Almeida J.P."/>
            <person name="Ambrose K.D."/>
            <person name="Anderson F."/>
            <person name="Andrew R.W."/>
            <person name="Ashwell R.I.S."/>
            <person name="Aubin K."/>
            <person name="Babbage A.K."/>
            <person name="Bagguley C.L."/>
            <person name="Bailey J."/>
            <person name="Beasley H."/>
            <person name="Bethel G."/>
            <person name="Bird C.P."/>
            <person name="Bray-Allen S."/>
            <person name="Brown J.Y."/>
            <person name="Brown A.J."/>
            <person name="Buckley D."/>
            <person name="Burton J."/>
            <person name="Bye J."/>
            <person name="Carder C."/>
            <person name="Chapman J.C."/>
            <person name="Clark S.Y."/>
            <person name="Clarke G."/>
            <person name="Clee C."/>
            <person name="Cobley V."/>
            <person name="Collier R.E."/>
            <person name="Corby N."/>
            <person name="Coville G.J."/>
            <person name="Davies J."/>
            <person name="Deadman R."/>
            <person name="Dunn M."/>
            <person name="Earthrowl M."/>
            <person name="Ellington A.G."/>
            <person name="Errington H."/>
            <person name="Frankish A."/>
            <person name="Frankland J."/>
            <person name="French L."/>
            <person name="Garner P."/>
            <person name="Garnett J."/>
            <person name="Gay L."/>
            <person name="Ghori M.R.J."/>
            <person name="Gibson R."/>
            <person name="Gilby L.M."/>
            <person name="Gillett W."/>
            <person name="Glithero R.J."/>
            <person name="Grafham D.V."/>
            <person name="Griffiths C."/>
            <person name="Griffiths-Jones S."/>
            <person name="Grocock R."/>
            <person name="Hammond S."/>
            <person name="Harrison E.S.I."/>
            <person name="Hart E."/>
            <person name="Haugen E."/>
            <person name="Heath P.D."/>
            <person name="Holmes S."/>
            <person name="Holt K."/>
            <person name="Howden P.J."/>
            <person name="Hunt A.R."/>
            <person name="Hunt S.E."/>
            <person name="Hunter G."/>
            <person name="Isherwood J."/>
            <person name="James R."/>
            <person name="Johnson C."/>
            <person name="Johnson D."/>
            <person name="Joy A."/>
            <person name="Kay M."/>
            <person name="Kershaw J.K."/>
            <person name="Kibukawa M."/>
            <person name="Kimberley A.M."/>
            <person name="King A."/>
            <person name="Knights A.J."/>
            <person name="Lad H."/>
            <person name="Laird G."/>
            <person name="Lawlor S."/>
            <person name="Leongamornlert D.A."/>
            <person name="Lloyd D.M."/>
            <person name="Loveland J."/>
            <person name="Lovell J."/>
            <person name="Lush M.J."/>
            <person name="Lyne R."/>
            <person name="Martin S."/>
            <person name="Mashreghi-Mohammadi M."/>
            <person name="Matthews L."/>
            <person name="Matthews N.S.W."/>
            <person name="McLaren S."/>
            <person name="Milne S."/>
            <person name="Mistry S."/>
            <person name="Moore M.J.F."/>
            <person name="Nickerson T."/>
            <person name="O'Dell C.N."/>
            <person name="Oliver K."/>
            <person name="Palmeiri A."/>
            <person name="Palmer S.A."/>
            <person name="Parker A."/>
            <person name="Patel D."/>
            <person name="Pearce A.V."/>
            <person name="Peck A.I."/>
            <person name="Pelan S."/>
            <person name="Phelps K."/>
            <person name="Phillimore B.J."/>
            <person name="Plumb R."/>
            <person name="Rajan J."/>
            <person name="Raymond C."/>
            <person name="Rouse G."/>
            <person name="Saenphimmachak C."/>
            <person name="Sehra H.K."/>
            <person name="Sheridan E."/>
            <person name="Shownkeen R."/>
            <person name="Sims S."/>
            <person name="Skuce C.D."/>
            <person name="Smith M."/>
            <person name="Steward C."/>
            <person name="Subramanian S."/>
            <person name="Sycamore N."/>
            <person name="Tracey A."/>
            <person name="Tromans A."/>
            <person name="Van Helmond Z."/>
            <person name="Wall M."/>
            <person name="Wallis J.M."/>
            <person name="White S."/>
            <person name="Whitehead S.L."/>
            <person name="Wilkinson J.E."/>
            <person name="Willey D.L."/>
            <person name="Williams H."/>
            <person name="Wilming L."/>
            <person name="Wray P.W."/>
            <person name="Wu Z."/>
            <person name="Coulson A."/>
            <person name="Vaudin M."/>
            <person name="Sulston J.E."/>
            <person name="Durbin R.M."/>
            <person name="Hubbard T."/>
            <person name="Wooster R."/>
            <person name="Dunham I."/>
            <person name="Carter N.P."/>
            <person name="McVean G."/>
            <person name="Ross M.T."/>
            <person name="Harrow J."/>
            <person name="Olson M.V."/>
            <person name="Beck S."/>
            <person name="Rogers J."/>
            <person name="Bentley D.R."/>
        </authorList>
    </citation>
    <scope>NUCLEOTIDE SEQUENCE [LARGE SCALE GENOMIC DNA]</scope>
</reference>
<reference key="5">
    <citation type="journal article" date="2004" name="Genome Res.">
        <title>The status, quality, and expansion of the NIH full-length cDNA project: the Mammalian Gene Collection (MGC).</title>
        <authorList>
            <consortium name="The MGC Project Team"/>
        </authorList>
    </citation>
    <scope>NUCLEOTIDE SEQUENCE [LARGE SCALE MRNA] (ISOFORM 1)</scope>
</reference>
<reference key="6">
    <citation type="journal article" date="2003" name="Nat. Cell Biol.">
        <title>Targeting of protein ubiquitination by BTB-Cullin 3-Roc1 ubiquitin ligases.</title>
        <authorList>
            <person name="Furukawa M."/>
            <person name="He Y.J."/>
            <person name="Borchers C."/>
            <person name="Xiong Y."/>
        </authorList>
    </citation>
    <scope>FUNCTION AS AN E3 UBIQUITIN-PROTEIN LIGASE</scope>
    <scope>INTERACTION WITH CUL3</scope>
</reference>
<reference key="7">
    <citation type="journal article" date="2007" name="Circ. Res.">
        <title>The BTB-Kelch protein KLEIP controls endothelial migration and sprouting angiogenesis.</title>
        <authorList>
            <person name="Nacak T.G."/>
            <person name="Alajati A."/>
            <person name="Leptien K."/>
            <person name="Fulda C."/>
            <person name="Weber H."/>
            <person name="Miki T."/>
            <person name="Czepluch F.S."/>
            <person name="Waltenberger J."/>
            <person name="Wieland T."/>
            <person name="Augustin H.G."/>
            <person name="Kroll J."/>
        </authorList>
    </citation>
    <scope>FUNCTION</scope>
</reference>
<reference key="8">
    <citation type="journal article" date="2010" name="EMBO J.">
        <title>The Cullin 3 substrate adaptor KLHL20 mediates DAPK ubiquitination to control interferon responses.</title>
        <authorList>
            <person name="Lee Y.R."/>
            <person name="Yuan W.C."/>
            <person name="Ho H.C."/>
            <person name="Chen C.H."/>
            <person name="Shih H.M."/>
            <person name="Chen R.H."/>
        </authorList>
    </citation>
    <scope>FUNCTION</scope>
    <scope>SUBCELLULAR LOCATION</scope>
    <scope>IDENTIFICATION IN A BCR (BTB-CUL3-RBX1) E3 UBIQUITIN LIGASE COMPLEX</scope>
    <scope>INTERACTION WITH DAPK1 AND IFNG</scope>
    <scope>MUTAGENESIS OF VAL-109; ILE-111; ASP-113; CYS-146; LEU-148 AND LEU-150</scope>
</reference>
<reference key="9">
    <citation type="journal article" date="2011" name="Cancer Cell">
        <title>A Cullin3-KLHL20 Ubiquitin ligase-dependent pathway targets PML to potentiate HIF-1 signaling and prostate cancer progression.</title>
        <authorList>
            <person name="Yuan W.C."/>
            <person name="Lee Y.R."/>
            <person name="Huang S.F."/>
            <person name="Lin Y.M."/>
            <person name="Chen T.Y."/>
            <person name="Chung H.C."/>
            <person name="Tsai C.H."/>
            <person name="Chen H.Y."/>
            <person name="Chiang C.T."/>
            <person name="Lai C.K."/>
            <person name="Lu L.T."/>
            <person name="Chen C.H."/>
            <person name="Gu D.L."/>
            <person name="Pu Y.S."/>
            <person name="Jou Y.S."/>
            <person name="Lu K.P."/>
            <person name="Hsiao P.W."/>
            <person name="Shih H.M."/>
            <person name="Chen R.H."/>
        </authorList>
    </citation>
    <scope>FUNCTION</scope>
    <scope>INTERACTION WITH PML</scope>
    <scope>IDENTIFICATION IN A BCR (BTB-CUL3-RBX1) E3 UBIQUITIN LIGASE COMPLEX</scope>
    <scope>INDUCTION</scope>
    <scope>MUTAGENESIS OF VAL-109; ILE-111; ASP-113; CYS-146; LEU-148 AND LEU-150</scope>
</reference>
<reference key="10">
    <citation type="journal article" date="2011" name="J. Cell Biol.">
        <title>PDZ-RhoGEF ubiquitination by Cullin3-KLHL20 controls neurotrophin-induced neurite outgrowth.</title>
        <authorList>
            <person name="Lin M.Y."/>
            <person name="Lin Y.M."/>
            <person name="Kao T.C."/>
            <person name="Chuang H.H."/>
            <person name="Chen R.H."/>
        </authorList>
    </citation>
    <scope>FUNCTION</scope>
    <scope>INTERACTION WITH ARHGEF11</scope>
    <scope>IDENTIFICATION IN A BCR (BTB-CUL3-RBX1) E3 UBIQUITIN LIGASE COMPLEX</scope>
    <scope>MUTAGENESIS OF VAL-109; ILE-111; ASP-113; CYS-146; LEU-148 AND LEU-150</scope>
</reference>
<reference key="11">
    <citation type="journal article" date="2014" name="Mol. Cell">
        <title>K33-linked polyubiquitination of coronin 7 by Cul3-KLHL20 ubiquitin E3 ligase regulates protein trafficking.</title>
        <authorList>
            <person name="Yuan W.C."/>
            <person name="Lee Y.R."/>
            <person name="Lin S.Y."/>
            <person name="Chang L.Y."/>
            <person name="Tan Y.P."/>
            <person name="Hung C.C."/>
            <person name="Kuo J.C."/>
            <person name="Liu C.H."/>
            <person name="Lin M.Y."/>
            <person name="Xu M."/>
            <person name="Chen Z.J."/>
            <person name="Chen R.H."/>
        </authorList>
    </citation>
    <scope>FUNCTION</scope>
    <scope>SUBCELLULAR LOCATION</scope>
    <scope>IDENTIFICATION IN A BCR (BTB-CUL3-RBX1) E3 UBIQUITIN LIGASE COMPLEX</scope>
    <scope>INTERACTION WITH CORO7</scope>
    <scope>MUTAGENESIS OF VAL-109; ILE-111; ASP-113; CYS-146; LEU-148 AND LEU-150</scope>
</reference>
<reference key="12">
    <citation type="journal article" date="2015" name="Oncogene">
        <title>KLHL39 suppresses colon cancer metastasis by blocking KLHL20-mediated PML and DAPK ubiquitination.</title>
        <authorList>
            <person name="Chen H.Y."/>
            <person name="Hu J.Y."/>
            <person name="Chen T.H."/>
            <person name="Lin Y.C."/>
            <person name="Liu X."/>
            <person name="Lin M.Y."/>
            <person name="Lang Y.D."/>
            <person name="Yen Y."/>
            <person name="Chen R.H."/>
        </authorList>
    </citation>
    <scope>INTERACTION WITH IVNS1ABP</scope>
</reference>